<evidence type="ECO:0000255" key="1">
    <source>
        <dbReference type="HAMAP-Rule" id="MF_00658"/>
    </source>
</evidence>
<feature type="chain" id="PRO_0000198084" description="Ribosomal RNA large subunit methyltransferase H">
    <location>
        <begin position="1"/>
        <end position="157"/>
    </location>
</feature>
<feature type="binding site" evidence="1">
    <location>
        <position position="73"/>
    </location>
    <ligand>
        <name>S-adenosyl-L-methionine</name>
        <dbReference type="ChEBI" id="CHEBI:59789"/>
    </ligand>
</feature>
<feature type="binding site" evidence="1">
    <location>
        <position position="105"/>
    </location>
    <ligand>
        <name>S-adenosyl-L-methionine</name>
        <dbReference type="ChEBI" id="CHEBI:59789"/>
    </ligand>
</feature>
<feature type="binding site" evidence="1">
    <location>
        <begin position="124"/>
        <end position="129"/>
    </location>
    <ligand>
        <name>S-adenosyl-L-methionine</name>
        <dbReference type="ChEBI" id="CHEBI:59789"/>
    </ligand>
</feature>
<protein>
    <recommendedName>
        <fullName evidence="1">Ribosomal RNA large subunit methyltransferase H</fullName>
        <ecNumber evidence="1">2.1.1.177</ecNumber>
    </recommendedName>
    <alternativeName>
        <fullName evidence="1">23S rRNA (pseudouridine1915-N3)-methyltransferase</fullName>
    </alternativeName>
    <alternativeName>
        <fullName evidence="1">23S rRNA m3Psi1915 methyltransferase</fullName>
    </alternativeName>
    <alternativeName>
        <fullName evidence="1">rRNA (pseudouridine-N3-)-methyltransferase RlmH</fullName>
    </alternativeName>
</protein>
<sequence length="157" mass="18224">MKTTLIVVGRTVEQHYITAINDYIERTKHFISFDMEVIPELKNTKSLTPEQQKEKEGELIAKALQPGDVVVLLDEHGKEMRSVEFARWMEKKLVNVNKRLVFIIGGPYGFSQKVYDAAHEKISMSKMTFSHQMIRLIFVEQIYRAMTILNGGPYHHE</sequence>
<gene>
    <name evidence="1" type="primary">rlmH</name>
    <name type="ordered locus">BF1398</name>
</gene>
<proteinExistence type="inferred from homology"/>
<dbReference type="EC" id="2.1.1.177" evidence="1"/>
<dbReference type="EMBL" id="CR626927">
    <property type="protein sequence ID" value="CAH07110.1"/>
    <property type="molecule type" value="Genomic_DNA"/>
</dbReference>
<dbReference type="RefSeq" id="WP_005786211.1">
    <property type="nucleotide sequence ID" value="NZ_UFTH01000001.1"/>
</dbReference>
<dbReference type="SMR" id="Q5LFI4"/>
<dbReference type="PaxDb" id="272559-BF9343_1329"/>
<dbReference type="GeneID" id="60369656"/>
<dbReference type="KEGG" id="bfs:BF9343_1329"/>
<dbReference type="eggNOG" id="COG1576">
    <property type="taxonomic scope" value="Bacteria"/>
</dbReference>
<dbReference type="HOGENOM" id="CLU_100552_2_0_10"/>
<dbReference type="Proteomes" id="UP000006731">
    <property type="component" value="Chromosome"/>
</dbReference>
<dbReference type="GO" id="GO:0005737">
    <property type="term" value="C:cytoplasm"/>
    <property type="evidence" value="ECO:0007669"/>
    <property type="project" value="UniProtKB-SubCell"/>
</dbReference>
<dbReference type="GO" id="GO:0070038">
    <property type="term" value="F:rRNA (pseudouridine-N3-)-methyltransferase activity"/>
    <property type="evidence" value="ECO:0007669"/>
    <property type="project" value="UniProtKB-UniRule"/>
</dbReference>
<dbReference type="CDD" id="cd18081">
    <property type="entry name" value="RlmH-like"/>
    <property type="match status" value="1"/>
</dbReference>
<dbReference type="Gene3D" id="3.40.1280.10">
    <property type="match status" value="1"/>
</dbReference>
<dbReference type="HAMAP" id="MF_00658">
    <property type="entry name" value="23SrRNA_methyltr_H"/>
    <property type="match status" value="1"/>
</dbReference>
<dbReference type="InterPro" id="IPR029028">
    <property type="entry name" value="Alpha/beta_knot_MTases"/>
</dbReference>
<dbReference type="InterPro" id="IPR003742">
    <property type="entry name" value="RlmH-like"/>
</dbReference>
<dbReference type="InterPro" id="IPR029026">
    <property type="entry name" value="tRNA_m1G_MTases_N"/>
</dbReference>
<dbReference type="NCBIfam" id="NF000990">
    <property type="entry name" value="PRK00103.2-4"/>
    <property type="match status" value="1"/>
</dbReference>
<dbReference type="PANTHER" id="PTHR33603">
    <property type="entry name" value="METHYLTRANSFERASE"/>
    <property type="match status" value="1"/>
</dbReference>
<dbReference type="PANTHER" id="PTHR33603:SF1">
    <property type="entry name" value="RIBOSOMAL RNA LARGE SUBUNIT METHYLTRANSFERASE H"/>
    <property type="match status" value="1"/>
</dbReference>
<dbReference type="Pfam" id="PF02590">
    <property type="entry name" value="SPOUT_MTase"/>
    <property type="match status" value="1"/>
</dbReference>
<dbReference type="PIRSF" id="PIRSF004505">
    <property type="entry name" value="MT_bac"/>
    <property type="match status" value="1"/>
</dbReference>
<dbReference type="SUPFAM" id="SSF75217">
    <property type="entry name" value="alpha/beta knot"/>
    <property type="match status" value="1"/>
</dbReference>
<reference key="1">
    <citation type="journal article" date="2005" name="Science">
        <title>Extensive DNA inversions in the B. fragilis genome control variable gene expression.</title>
        <authorList>
            <person name="Cerdeno-Tarraga A.-M."/>
            <person name="Patrick S."/>
            <person name="Crossman L.C."/>
            <person name="Blakely G."/>
            <person name="Abratt V."/>
            <person name="Lennard N."/>
            <person name="Poxton I."/>
            <person name="Duerden B."/>
            <person name="Harris B."/>
            <person name="Quail M.A."/>
            <person name="Barron A."/>
            <person name="Clark L."/>
            <person name="Corton C."/>
            <person name="Doggett J."/>
            <person name="Holden M.T.G."/>
            <person name="Larke N."/>
            <person name="Line A."/>
            <person name="Lord A."/>
            <person name="Norbertczak H."/>
            <person name="Ormond D."/>
            <person name="Price C."/>
            <person name="Rabbinowitsch E."/>
            <person name="Woodward J."/>
            <person name="Barrell B.G."/>
            <person name="Parkhill J."/>
        </authorList>
    </citation>
    <scope>NUCLEOTIDE SEQUENCE [LARGE SCALE GENOMIC DNA]</scope>
    <source>
        <strain>ATCC 25285 / DSM 2151 / CCUG 4856 / JCM 11019 / LMG 10263 / NCTC 9343 / Onslow / VPI 2553 / EN-2</strain>
    </source>
</reference>
<accession>Q5LFI4</accession>
<organism>
    <name type="scientific">Bacteroides fragilis (strain ATCC 25285 / DSM 2151 / CCUG 4856 / JCM 11019 / LMG 10263 / NCTC 9343 / Onslow / VPI 2553 / EN-2)</name>
    <dbReference type="NCBI Taxonomy" id="272559"/>
    <lineage>
        <taxon>Bacteria</taxon>
        <taxon>Pseudomonadati</taxon>
        <taxon>Bacteroidota</taxon>
        <taxon>Bacteroidia</taxon>
        <taxon>Bacteroidales</taxon>
        <taxon>Bacteroidaceae</taxon>
        <taxon>Bacteroides</taxon>
    </lineage>
</organism>
<name>RLMH_BACFN</name>
<comment type="function">
    <text evidence="1">Specifically methylates the pseudouridine at position 1915 (m3Psi1915) in 23S rRNA.</text>
</comment>
<comment type="catalytic activity">
    <reaction evidence="1">
        <text>pseudouridine(1915) in 23S rRNA + S-adenosyl-L-methionine = N(3)-methylpseudouridine(1915) in 23S rRNA + S-adenosyl-L-homocysteine + H(+)</text>
        <dbReference type="Rhea" id="RHEA:42752"/>
        <dbReference type="Rhea" id="RHEA-COMP:10221"/>
        <dbReference type="Rhea" id="RHEA-COMP:10222"/>
        <dbReference type="ChEBI" id="CHEBI:15378"/>
        <dbReference type="ChEBI" id="CHEBI:57856"/>
        <dbReference type="ChEBI" id="CHEBI:59789"/>
        <dbReference type="ChEBI" id="CHEBI:65314"/>
        <dbReference type="ChEBI" id="CHEBI:74486"/>
        <dbReference type="EC" id="2.1.1.177"/>
    </reaction>
</comment>
<comment type="subunit">
    <text evidence="1">Homodimer.</text>
</comment>
<comment type="subcellular location">
    <subcellularLocation>
        <location evidence="1">Cytoplasm</location>
    </subcellularLocation>
</comment>
<comment type="similarity">
    <text evidence="1">Belongs to the RNA methyltransferase RlmH family.</text>
</comment>
<keyword id="KW-0963">Cytoplasm</keyword>
<keyword id="KW-0489">Methyltransferase</keyword>
<keyword id="KW-0698">rRNA processing</keyword>
<keyword id="KW-0949">S-adenosyl-L-methionine</keyword>
<keyword id="KW-0808">Transferase</keyword>